<organism>
    <name type="scientific">Geobacter metallireducens (strain ATCC 53774 / DSM 7210 / GS-15)</name>
    <dbReference type="NCBI Taxonomy" id="269799"/>
    <lineage>
        <taxon>Bacteria</taxon>
        <taxon>Pseudomonadati</taxon>
        <taxon>Thermodesulfobacteriota</taxon>
        <taxon>Desulfuromonadia</taxon>
        <taxon>Geobacterales</taxon>
        <taxon>Geobacteraceae</taxon>
        <taxon>Geobacter</taxon>
    </lineage>
</organism>
<comment type="function">
    <text evidence="1">With S4 and S12 plays an important role in translational accuracy.</text>
</comment>
<comment type="function">
    <text evidence="1">Located at the back of the 30S subunit body where it stabilizes the conformation of the head with respect to the body.</text>
</comment>
<comment type="subunit">
    <text evidence="1">Part of the 30S ribosomal subunit. Contacts proteins S4 and S8.</text>
</comment>
<comment type="domain">
    <text>The N-terminal domain interacts with the head of the 30S subunit; the C-terminal domain interacts with the body and contacts protein S4. The interaction surface between S4 and S5 is involved in control of translational fidelity.</text>
</comment>
<comment type="similarity">
    <text evidence="1">Belongs to the universal ribosomal protein uS5 family.</text>
</comment>
<reference key="1">
    <citation type="journal article" date="2009" name="BMC Microbiol.">
        <title>The genome sequence of Geobacter metallireducens: features of metabolism, physiology and regulation common and dissimilar to Geobacter sulfurreducens.</title>
        <authorList>
            <person name="Aklujkar M."/>
            <person name="Krushkal J."/>
            <person name="DiBartolo G."/>
            <person name="Lapidus A."/>
            <person name="Land M.L."/>
            <person name="Lovley D.R."/>
        </authorList>
    </citation>
    <scope>NUCLEOTIDE SEQUENCE [LARGE SCALE GENOMIC DNA]</scope>
    <source>
        <strain>ATCC 53774 / DSM 7210 / GS-15</strain>
    </source>
</reference>
<proteinExistence type="inferred from homology"/>
<protein>
    <recommendedName>
        <fullName evidence="1">Small ribosomal subunit protein uS5</fullName>
    </recommendedName>
    <alternativeName>
        <fullName evidence="2">30S ribosomal protein S5</fullName>
    </alternativeName>
</protein>
<sequence length="162" mass="17039">MQKINPNELNLTDKVVHISRVAKVVKGGRRFSFSALVVVGDGSGFVGYGLGKANEVPEAIRKGVEQAKKNLIKVPIVEGQTIPYEVLGHFGAGRVLIKPASAGTGVIAGGAARAVFESAGLHNVLSKCLGSNNPHNVVKAAFDGLKQLRSPDEIMARRGMAE</sequence>
<feature type="chain" id="PRO_0000230346" description="Small ribosomal subunit protein uS5">
    <location>
        <begin position="1"/>
        <end position="162"/>
    </location>
</feature>
<feature type="domain" description="S5 DRBM" evidence="1">
    <location>
        <begin position="11"/>
        <end position="74"/>
    </location>
</feature>
<name>RS5_GEOMG</name>
<keyword id="KW-1185">Reference proteome</keyword>
<keyword id="KW-0687">Ribonucleoprotein</keyword>
<keyword id="KW-0689">Ribosomal protein</keyword>
<keyword id="KW-0694">RNA-binding</keyword>
<keyword id="KW-0699">rRNA-binding</keyword>
<accession>Q39XY9</accession>
<evidence type="ECO:0000255" key="1">
    <source>
        <dbReference type="HAMAP-Rule" id="MF_01307"/>
    </source>
</evidence>
<evidence type="ECO:0000305" key="2"/>
<dbReference type="EMBL" id="CP000148">
    <property type="protein sequence ID" value="ABB30885.1"/>
    <property type="molecule type" value="Genomic_DNA"/>
</dbReference>
<dbReference type="RefSeq" id="WP_004514253.1">
    <property type="nucleotide sequence ID" value="NC_007517.1"/>
</dbReference>
<dbReference type="SMR" id="Q39XY9"/>
<dbReference type="STRING" id="269799.Gmet_0643"/>
<dbReference type="KEGG" id="gme:Gmet_0643"/>
<dbReference type="eggNOG" id="COG0098">
    <property type="taxonomic scope" value="Bacteria"/>
</dbReference>
<dbReference type="HOGENOM" id="CLU_065898_2_2_7"/>
<dbReference type="Proteomes" id="UP000007073">
    <property type="component" value="Chromosome"/>
</dbReference>
<dbReference type="GO" id="GO:0015935">
    <property type="term" value="C:small ribosomal subunit"/>
    <property type="evidence" value="ECO:0007669"/>
    <property type="project" value="InterPro"/>
</dbReference>
<dbReference type="GO" id="GO:0019843">
    <property type="term" value="F:rRNA binding"/>
    <property type="evidence" value="ECO:0007669"/>
    <property type="project" value="UniProtKB-UniRule"/>
</dbReference>
<dbReference type="GO" id="GO:0003735">
    <property type="term" value="F:structural constituent of ribosome"/>
    <property type="evidence" value="ECO:0007669"/>
    <property type="project" value="InterPro"/>
</dbReference>
<dbReference type="GO" id="GO:0006412">
    <property type="term" value="P:translation"/>
    <property type="evidence" value="ECO:0007669"/>
    <property type="project" value="UniProtKB-UniRule"/>
</dbReference>
<dbReference type="FunFam" id="3.30.160.20:FF:000001">
    <property type="entry name" value="30S ribosomal protein S5"/>
    <property type="match status" value="1"/>
</dbReference>
<dbReference type="FunFam" id="3.30.230.10:FF:000002">
    <property type="entry name" value="30S ribosomal protein S5"/>
    <property type="match status" value="1"/>
</dbReference>
<dbReference type="Gene3D" id="3.30.160.20">
    <property type="match status" value="1"/>
</dbReference>
<dbReference type="Gene3D" id="3.30.230.10">
    <property type="match status" value="1"/>
</dbReference>
<dbReference type="HAMAP" id="MF_01307_B">
    <property type="entry name" value="Ribosomal_uS5_B"/>
    <property type="match status" value="1"/>
</dbReference>
<dbReference type="InterPro" id="IPR020568">
    <property type="entry name" value="Ribosomal_Su5_D2-typ_SF"/>
</dbReference>
<dbReference type="InterPro" id="IPR000851">
    <property type="entry name" value="Ribosomal_uS5"/>
</dbReference>
<dbReference type="InterPro" id="IPR005712">
    <property type="entry name" value="Ribosomal_uS5_bac-type"/>
</dbReference>
<dbReference type="InterPro" id="IPR005324">
    <property type="entry name" value="Ribosomal_uS5_C"/>
</dbReference>
<dbReference type="InterPro" id="IPR013810">
    <property type="entry name" value="Ribosomal_uS5_N"/>
</dbReference>
<dbReference type="InterPro" id="IPR018192">
    <property type="entry name" value="Ribosomal_uS5_N_CS"/>
</dbReference>
<dbReference type="InterPro" id="IPR014721">
    <property type="entry name" value="Ribsml_uS5_D2-typ_fold_subgr"/>
</dbReference>
<dbReference type="NCBIfam" id="TIGR01021">
    <property type="entry name" value="rpsE_bact"/>
    <property type="match status" value="1"/>
</dbReference>
<dbReference type="PANTHER" id="PTHR48277">
    <property type="entry name" value="MITOCHONDRIAL RIBOSOMAL PROTEIN S5"/>
    <property type="match status" value="1"/>
</dbReference>
<dbReference type="PANTHER" id="PTHR48277:SF1">
    <property type="entry name" value="MITOCHONDRIAL RIBOSOMAL PROTEIN S5"/>
    <property type="match status" value="1"/>
</dbReference>
<dbReference type="Pfam" id="PF00333">
    <property type="entry name" value="Ribosomal_S5"/>
    <property type="match status" value="1"/>
</dbReference>
<dbReference type="Pfam" id="PF03719">
    <property type="entry name" value="Ribosomal_S5_C"/>
    <property type="match status" value="1"/>
</dbReference>
<dbReference type="SUPFAM" id="SSF54768">
    <property type="entry name" value="dsRNA-binding domain-like"/>
    <property type="match status" value="1"/>
</dbReference>
<dbReference type="SUPFAM" id="SSF54211">
    <property type="entry name" value="Ribosomal protein S5 domain 2-like"/>
    <property type="match status" value="1"/>
</dbReference>
<dbReference type="PROSITE" id="PS00585">
    <property type="entry name" value="RIBOSOMAL_S5"/>
    <property type="match status" value="1"/>
</dbReference>
<dbReference type="PROSITE" id="PS50881">
    <property type="entry name" value="S5_DSRBD"/>
    <property type="match status" value="1"/>
</dbReference>
<gene>
    <name evidence="1" type="primary">rpsE</name>
    <name type="ordered locus">Gmet_0643</name>
</gene>